<accession>A9MJR7</accession>
<comment type="function">
    <text evidence="1">Produces ATP from ADP in the presence of a proton gradient across the membrane. The alpha chain is a regulatory subunit.</text>
</comment>
<comment type="catalytic activity">
    <reaction evidence="1">
        <text>ATP + H2O + 4 H(+)(in) = ADP + phosphate + 5 H(+)(out)</text>
        <dbReference type="Rhea" id="RHEA:57720"/>
        <dbReference type="ChEBI" id="CHEBI:15377"/>
        <dbReference type="ChEBI" id="CHEBI:15378"/>
        <dbReference type="ChEBI" id="CHEBI:30616"/>
        <dbReference type="ChEBI" id="CHEBI:43474"/>
        <dbReference type="ChEBI" id="CHEBI:456216"/>
        <dbReference type="EC" id="7.1.2.2"/>
    </reaction>
</comment>
<comment type="subunit">
    <text evidence="1">F-type ATPases have 2 components, CF(1) - the catalytic core - and CF(0) - the membrane proton channel. CF(1) has five subunits: alpha(3), beta(3), gamma(1), delta(1), epsilon(1). CF(0) has three main subunits: a(1), b(2) and c(9-12). The alpha and beta chains form an alternating ring which encloses part of the gamma chain. CF(1) is attached to CF(0) by a central stalk formed by the gamma and epsilon chains, while a peripheral stalk is formed by the delta and b chains.</text>
</comment>
<comment type="subcellular location">
    <subcellularLocation>
        <location evidence="1">Cell inner membrane</location>
        <topology evidence="1">Peripheral membrane protein</topology>
    </subcellularLocation>
</comment>
<comment type="similarity">
    <text evidence="1">Belongs to the ATPase alpha/beta chains family.</text>
</comment>
<protein>
    <recommendedName>
        <fullName evidence="1">ATP synthase subunit alpha</fullName>
        <ecNumber evidence="1">7.1.2.2</ecNumber>
    </recommendedName>
    <alternativeName>
        <fullName evidence="1">ATP synthase F1 sector subunit alpha</fullName>
    </alternativeName>
    <alternativeName>
        <fullName evidence="1">F-ATPase subunit alpha</fullName>
    </alternativeName>
</protein>
<sequence>MQLNSTEISELIKQRIAQFNVVSEAHNEGTIVSVSDGVIRIHGLADCMQGEMISLPGNRYAIALNLERDSVGAVVMGPYADLAEGMKVKCTGRILEVPVGRGLLGRVVNTLGAPIDGKGPVDNDGFSAVEAIAPGVIDRQSVDQPVQTGYKAVDSMIPIGRGQRELIIGDRQTGKTALAIDAIINQRDSGIKCIYVAIGQKASTISNVVRKLEEHGALANTIVVVATASESAALQYLAPYAGCAMGEYFRDRGEDALIIYDDLSKQAVAYRQISLLLRRPPGREAFPGDVFYLHSRLLERAARVNADYVEAYTKGEVKGKTGSLTALPIIETQAGDVSAFVPTNVISITDGQIFLESNLFNAGIRPAVNPGISVSRVGGAAQTKIMKKLSGGIRTALAQYRELAAFSQFASDLDDATRKQLDHGQKVTELLKQKQYAPMSVAQQSLVLFAAERGYLADVELAKIGSFEAALLAYVDRDHAPLMQEINQSGGYNDEIEGKLKGILDSFKATQSW</sequence>
<evidence type="ECO:0000255" key="1">
    <source>
        <dbReference type="HAMAP-Rule" id="MF_01346"/>
    </source>
</evidence>
<gene>
    <name evidence="1" type="primary">atpA</name>
    <name type="ordered locus">SARI_03784</name>
</gene>
<dbReference type="EC" id="7.1.2.2" evidence="1"/>
<dbReference type="EMBL" id="CP000880">
    <property type="protein sequence ID" value="ABX23578.1"/>
    <property type="molecule type" value="Genomic_DNA"/>
</dbReference>
<dbReference type="SMR" id="A9MJR7"/>
<dbReference type="STRING" id="41514.SARI_03784"/>
<dbReference type="KEGG" id="ses:SARI_03784"/>
<dbReference type="HOGENOM" id="CLU_010091_2_1_6"/>
<dbReference type="Proteomes" id="UP000002084">
    <property type="component" value="Chromosome"/>
</dbReference>
<dbReference type="GO" id="GO:0005886">
    <property type="term" value="C:plasma membrane"/>
    <property type="evidence" value="ECO:0007669"/>
    <property type="project" value="UniProtKB-SubCell"/>
</dbReference>
<dbReference type="GO" id="GO:0045259">
    <property type="term" value="C:proton-transporting ATP synthase complex"/>
    <property type="evidence" value="ECO:0007669"/>
    <property type="project" value="UniProtKB-KW"/>
</dbReference>
<dbReference type="GO" id="GO:0043531">
    <property type="term" value="F:ADP binding"/>
    <property type="evidence" value="ECO:0007669"/>
    <property type="project" value="TreeGrafter"/>
</dbReference>
<dbReference type="GO" id="GO:0005524">
    <property type="term" value="F:ATP binding"/>
    <property type="evidence" value="ECO:0007669"/>
    <property type="project" value="UniProtKB-UniRule"/>
</dbReference>
<dbReference type="GO" id="GO:0046933">
    <property type="term" value="F:proton-transporting ATP synthase activity, rotational mechanism"/>
    <property type="evidence" value="ECO:0007669"/>
    <property type="project" value="UniProtKB-UniRule"/>
</dbReference>
<dbReference type="CDD" id="cd18113">
    <property type="entry name" value="ATP-synt_F1_alpha_C"/>
    <property type="match status" value="1"/>
</dbReference>
<dbReference type="CDD" id="cd18116">
    <property type="entry name" value="ATP-synt_F1_alpha_N"/>
    <property type="match status" value="1"/>
</dbReference>
<dbReference type="CDD" id="cd01132">
    <property type="entry name" value="F1-ATPase_alpha_CD"/>
    <property type="match status" value="1"/>
</dbReference>
<dbReference type="FunFam" id="1.20.150.20:FF:000001">
    <property type="entry name" value="ATP synthase subunit alpha"/>
    <property type="match status" value="1"/>
</dbReference>
<dbReference type="FunFam" id="2.40.30.20:FF:000001">
    <property type="entry name" value="ATP synthase subunit alpha"/>
    <property type="match status" value="1"/>
</dbReference>
<dbReference type="FunFam" id="3.40.50.300:FF:000002">
    <property type="entry name" value="ATP synthase subunit alpha"/>
    <property type="match status" value="1"/>
</dbReference>
<dbReference type="Gene3D" id="2.40.30.20">
    <property type="match status" value="1"/>
</dbReference>
<dbReference type="Gene3D" id="1.20.150.20">
    <property type="entry name" value="ATP synthase alpha/beta chain, C-terminal domain"/>
    <property type="match status" value="1"/>
</dbReference>
<dbReference type="Gene3D" id="3.40.50.300">
    <property type="entry name" value="P-loop containing nucleotide triphosphate hydrolases"/>
    <property type="match status" value="1"/>
</dbReference>
<dbReference type="HAMAP" id="MF_01346">
    <property type="entry name" value="ATP_synth_alpha_bact"/>
    <property type="match status" value="1"/>
</dbReference>
<dbReference type="InterPro" id="IPR023366">
    <property type="entry name" value="ATP_synth_asu-like_sf"/>
</dbReference>
<dbReference type="InterPro" id="IPR000793">
    <property type="entry name" value="ATP_synth_asu_C"/>
</dbReference>
<dbReference type="InterPro" id="IPR038376">
    <property type="entry name" value="ATP_synth_asu_C_sf"/>
</dbReference>
<dbReference type="InterPro" id="IPR033732">
    <property type="entry name" value="ATP_synth_F1_a_nt-bd_dom"/>
</dbReference>
<dbReference type="InterPro" id="IPR005294">
    <property type="entry name" value="ATP_synth_F1_asu"/>
</dbReference>
<dbReference type="InterPro" id="IPR020003">
    <property type="entry name" value="ATPase_a/bsu_AS"/>
</dbReference>
<dbReference type="InterPro" id="IPR004100">
    <property type="entry name" value="ATPase_F1/V1/A1_a/bsu_N"/>
</dbReference>
<dbReference type="InterPro" id="IPR036121">
    <property type="entry name" value="ATPase_F1/V1/A1_a/bsu_N_sf"/>
</dbReference>
<dbReference type="InterPro" id="IPR000194">
    <property type="entry name" value="ATPase_F1/V1/A1_a/bsu_nucl-bd"/>
</dbReference>
<dbReference type="InterPro" id="IPR027417">
    <property type="entry name" value="P-loop_NTPase"/>
</dbReference>
<dbReference type="NCBIfam" id="TIGR00962">
    <property type="entry name" value="atpA"/>
    <property type="match status" value="1"/>
</dbReference>
<dbReference type="NCBIfam" id="NF009884">
    <property type="entry name" value="PRK13343.1"/>
    <property type="match status" value="1"/>
</dbReference>
<dbReference type="PANTHER" id="PTHR48082">
    <property type="entry name" value="ATP SYNTHASE SUBUNIT ALPHA, MITOCHONDRIAL"/>
    <property type="match status" value="1"/>
</dbReference>
<dbReference type="PANTHER" id="PTHR48082:SF2">
    <property type="entry name" value="ATP SYNTHASE SUBUNIT ALPHA, MITOCHONDRIAL"/>
    <property type="match status" value="1"/>
</dbReference>
<dbReference type="Pfam" id="PF00006">
    <property type="entry name" value="ATP-synt_ab"/>
    <property type="match status" value="1"/>
</dbReference>
<dbReference type="Pfam" id="PF00306">
    <property type="entry name" value="ATP-synt_ab_C"/>
    <property type="match status" value="1"/>
</dbReference>
<dbReference type="Pfam" id="PF02874">
    <property type="entry name" value="ATP-synt_ab_N"/>
    <property type="match status" value="1"/>
</dbReference>
<dbReference type="SUPFAM" id="SSF47917">
    <property type="entry name" value="C-terminal domain of alpha and beta subunits of F1 ATP synthase"/>
    <property type="match status" value="1"/>
</dbReference>
<dbReference type="SUPFAM" id="SSF50615">
    <property type="entry name" value="N-terminal domain of alpha and beta subunits of F1 ATP synthase"/>
    <property type="match status" value="1"/>
</dbReference>
<dbReference type="SUPFAM" id="SSF52540">
    <property type="entry name" value="P-loop containing nucleoside triphosphate hydrolases"/>
    <property type="match status" value="1"/>
</dbReference>
<dbReference type="PROSITE" id="PS00152">
    <property type="entry name" value="ATPASE_ALPHA_BETA"/>
    <property type="match status" value="1"/>
</dbReference>
<proteinExistence type="inferred from homology"/>
<keyword id="KW-0066">ATP synthesis</keyword>
<keyword id="KW-0067">ATP-binding</keyword>
<keyword id="KW-0997">Cell inner membrane</keyword>
<keyword id="KW-1003">Cell membrane</keyword>
<keyword id="KW-0139">CF(1)</keyword>
<keyword id="KW-0375">Hydrogen ion transport</keyword>
<keyword id="KW-0406">Ion transport</keyword>
<keyword id="KW-0472">Membrane</keyword>
<keyword id="KW-0547">Nucleotide-binding</keyword>
<keyword id="KW-1185">Reference proteome</keyword>
<keyword id="KW-1278">Translocase</keyword>
<keyword id="KW-0813">Transport</keyword>
<reference key="1">
    <citation type="submission" date="2007-11" db="EMBL/GenBank/DDBJ databases">
        <authorList>
            <consortium name="The Salmonella enterica serovar Arizonae Genome Sequencing Project"/>
            <person name="McClelland M."/>
            <person name="Sanderson E.K."/>
            <person name="Porwollik S."/>
            <person name="Spieth J."/>
            <person name="Clifton W.S."/>
            <person name="Fulton R."/>
            <person name="Chunyan W."/>
            <person name="Wollam A."/>
            <person name="Shah N."/>
            <person name="Pepin K."/>
            <person name="Bhonagiri V."/>
            <person name="Nash W."/>
            <person name="Johnson M."/>
            <person name="Thiruvilangam P."/>
            <person name="Wilson R."/>
        </authorList>
    </citation>
    <scope>NUCLEOTIDE SEQUENCE [LARGE SCALE GENOMIC DNA]</scope>
    <source>
        <strain>ATCC BAA-731 / CDC346-86 / RSK2980</strain>
    </source>
</reference>
<organism>
    <name type="scientific">Salmonella arizonae (strain ATCC BAA-731 / CDC346-86 / RSK2980)</name>
    <dbReference type="NCBI Taxonomy" id="41514"/>
    <lineage>
        <taxon>Bacteria</taxon>
        <taxon>Pseudomonadati</taxon>
        <taxon>Pseudomonadota</taxon>
        <taxon>Gammaproteobacteria</taxon>
        <taxon>Enterobacterales</taxon>
        <taxon>Enterobacteriaceae</taxon>
        <taxon>Salmonella</taxon>
    </lineage>
</organism>
<feature type="chain" id="PRO_1000086891" description="ATP synthase subunit alpha">
    <location>
        <begin position="1"/>
        <end position="513"/>
    </location>
</feature>
<feature type="binding site" evidence="1">
    <location>
        <begin position="169"/>
        <end position="176"/>
    </location>
    <ligand>
        <name>ATP</name>
        <dbReference type="ChEBI" id="CHEBI:30616"/>
    </ligand>
</feature>
<feature type="site" description="Required for activity" evidence="1">
    <location>
        <position position="373"/>
    </location>
</feature>
<name>ATPA_SALAR</name>